<evidence type="ECO:0000250" key="1"/>
<evidence type="ECO:0000250" key="2">
    <source>
        <dbReference type="UniProtKB" id="P12689"/>
    </source>
</evidence>
<evidence type="ECO:0000255" key="3"/>
<evidence type="ECO:0000255" key="4">
    <source>
        <dbReference type="PROSITE-ProRule" id="PRU00033"/>
    </source>
</evidence>
<evidence type="ECO:0000255" key="5">
    <source>
        <dbReference type="PROSITE-ProRule" id="PRU00216"/>
    </source>
</evidence>
<evidence type="ECO:0000256" key="6">
    <source>
        <dbReference type="SAM" id="MobiDB-lite"/>
    </source>
</evidence>
<evidence type="ECO:0000269" key="7">
    <source>
    </source>
</evidence>
<evidence type="ECO:0000305" key="8"/>
<evidence type="ECO:0000312" key="9">
    <source>
        <dbReference type="EMBL" id="CAA22130.2"/>
    </source>
</evidence>
<gene>
    <name evidence="9" type="primary">rev1</name>
    <name type="ORF">SPBC1347.01c</name>
</gene>
<reference evidence="9" key="1">
    <citation type="journal article" date="2002" name="Nature">
        <title>The genome sequence of Schizosaccharomyces pombe.</title>
        <authorList>
            <person name="Wood V."/>
            <person name="Gwilliam R."/>
            <person name="Rajandream M.A."/>
            <person name="Lyne M.H."/>
            <person name="Lyne R."/>
            <person name="Stewart A."/>
            <person name="Sgouros J.G."/>
            <person name="Peat N."/>
            <person name="Hayles J."/>
            <person name="Baker S.G."/>
            <person name="Basham D."/>
            <person name="Bowman S."/>
            <person name="Brooks K."/>
            <person name="Brown D."/>
            <person name="Brown S."/>
            <person name="Chillingworth T."/>
            <person name="Churcher C.M."/>
            <person name="Collins M."/>
            <person name="Connor R."/>
            <person name="Cronin A."/>
            <person name="Davis P."/>
            <person name="Feltwell T."/>
            <person name="Fraser A."/>
            <person name="Gentles S."/>
            <person name="Goble A."/>
            <person name="Hamlin N."/>
            <person name="Harris D.E."/>
            <person name="Hidalgo J."/>
            <person name="Hodgson G."/>
            <person name="Holroyd S."/>
            <person name="Hornsby T."/>
            <person name="Howarth S."/>
            <person name="Huckle E.J."/>
            <person name="Hunt S."/>
            <person name="Jagels K."/>
            <person name="James K.D."/>
            <person name="Jones L."/>
            <person name="Jones M."/>
            <person name="Leather S."/>
            <person name="McDonald S."/>
            <person name="McLean J."/>
            <person name="Mooney P."/>
            <person name="Moule S."/>
            <person name="Mungall K.L."/>
            <person name="Murphy L.D."/>
            <person name="Niblett D."/>
            <person name="Odell C."/>
            <person name="Oliver K."/>
            <person name="O'Neil S."/>
            <person name="Pearson D."/>
            <person name="Quail M.A."/>
            <person name="Rabbinowitsch E."/>
            <person name="Rutherford K.M."/>
            <person name="Rutter S."/>
            <person name="Saunders D."/>
            <person name="Seeger K."/>
            <person name="Sharp S."/>
            <person name="Skelton J."/>
            <person name="Simmonds M.N."/>
            <person name="Squares R."/>
            <person name="Squares S."/>
            <person name="Stevens K."/>
            <person name="Taylor K."/>
            <person name="Taylor R.G."/>
            <person name="Tivey A."/>
            <person name="Walsh S.V."/>
            <person name="Warren T."/>
            <person name="Whitehead S."/>
            <person name="Woodward J.R."/>
            <person name="Volckaert G."/>
            <person name="Aert R."/>
            <person name="Robben J."/>
            <person name="Grymonprez B."/>
            <person name="Weltjens I."/>
            <person name="Vanstreels E."/>
            <person name="Rieger M."/>
            <person name="Schaefer M."/>
            <person name="Mueller-Auer S."/>
            <person name="Gabel C."/>
            <person name="Fuchs M."/>
            <person name="Duesterhoeft A."/>
            <person name="Fritzc C."/>
            <person name="Holzer E."/>
            <person name="Moestl D."/>
            <person name="Hilbert H."/>
            <person name="Borzym K."/>
            <person name="Langer I."/>
            <person name="Beck A."/>
            <person name="Lehrach H."/>
            <person name="Reinhardt R."/>
            <person name="Pohl T.M."/>
            <person name="Eger P."/>
            <person name="Zimmermann W."/>
            <person name="Wedler H."/>
            <person name="Wambutt R."/>
            <person name="Purnelle B."/>
            <person name="Goffeau A."/>
            <person name="Cadieu E."/>
            <person name="Dreano S."/>
            <person name="Gloux S."/>
            <person name="Lelaure V."/>
            <person name="Mottier S."/>
            <person name="Galibert F."/>
            <person name="Aves S.J."/>
            <person name="Xiang Z."/>
            <person name="Hunt C."/>
            <person name="Moore K."/>
            <person name="Hurst S.M."/>
            <person name="Lucas M."/>
            <person name="Rochet M."/>
            <person name="Gaillardin C."/>
            <person name="Tallada V.A."/>
            <person name="Garzon A."/>
            <person name="Thode G."/>
            <person name="Daga R.R."/>
            <person name="Cruzado L."/>
            <person name="Jimenez J."/>
            <person name="Sanchez M."/>
            <person name="del Rey F."/>
            <person name="Benito J."/>
            <person name="Dominguez A."/>
            <person name="Revuelta J.L."/>
            <person name="Moreno S."/>
            <person name="Armstrong J."/>
            <person name="Forsburg S.L."/>
            <person name="Cerutti L."/>
            <person name="Lowe T."/>
            <person name="McCombie W.R."/>
            <person name="Paulsen I."/>
            <person name="Potashkin J."/>
            <person name="Shpakovski G.V."/>
            <person name="Ussery D."/>
            <person name="Barrell B.G."/>
            <person name="Nurse P."/>
        </authorList>
    </citation>
    <scope>NUCLEOTIDE SEQUENCE [LARGE SCALE GENOMIC DNA]</scope>
    <source>
        <strain>972 / ATCC 24843</strain>
    </source>
</reference>
<reference evidence="8" key="2">
    <citation type="journal article" date="2006" name="Nat. Biotechnol.">
        <title>ORFeome cloning and global analysis of protein localization in the fission yeast Schizosaccharomyces pombe.</title>
        <authorList>
            <person name="Matsuyama A."/>
            <person name="Arai R."/>
            <person name="Yashiroda Y."/>
            <person name="Shirai A."/>
            <person name="Kamata A."/>
            <person name="Sekido S."/>
            <person name="Kobayashi Y."/>
            <person name="Hashimoto A."/>
            <person name="Hamamoto M."/>
            <person name="Hiraoka Y."/>
            <person name="Horinouchi S."/>
            <person name="Yoshida M."/>
        </authorList>
    </citation>
    <scope>SUBCELLULAR LOCATION [LARGE SCALE ANALYSIS]</scope>
</reference>
<name>REV1_SCHPO</name>
<dbReference type="EC" id="2.7.7.-"/>
<dbReference type="EMBL" id="CU329671">
    <property type="protein sequence ID" value="CAA22130.2"/>
    <property type="molecule type" value="Genomic_DNA"/>
</dbReference>
<dbReference type="RefSeq" id="NP_596693.2">
    <property type="nucleotide sequence ID" value="NM_001022616.3"/>
</dbReference>
<dbReference type="SMR" id="O94623"/>
<dbReference type="BioGRID" id="276276">
    <property type="interactions" value="9"/>
</dbReference>
<dbReference type="FunCoup" id="O94623">
    <property type="interactions" value="415"/>
</dbReference>
<dbReference type="IntAct" id="O94623">
    <property type="interactions" value="1"/>
</dbReference>
<dbReference type="STRING" id="284812.O94623"/>
<dbReference type="PaxDb" id="4896-SPBC1347.01c.1"/>
<dbReference type="EnsemblFungi" id="SPBC1347.01c.1">
    <property type="protein sequence ID" value="SPBC1347.01c.1:pep"/>
    <property type="gene ID" value="SPBC1347.01c"/>
</dbReference>
<dbReference type="GeneID" id="2539723"/>
<dbReference type="KEGG" id="spo:2539723"/>
<dbReference type="PomBase" id="SPBC1347.01c">
    <property type="gene designation" value="rev1"/>
</dbReference>
<dbReference type="VEuPathDB" id="FungiDB:SPBC1347.01c"/>
<dbReference type="eggNOG" id="KOG2093">
    <property type="taxonomic scope" value="Eukaryota"/>
</dbReference>
<dbReference type="HOGENOM" id="CLU_003901_1_0_1"/>
<dbReference type="InParanoid" id="O94623"/>
<dbReference type="OMA" id="GGEFHIY"/>
<dbReference type="PhylomeDB" id="O94623"/>
<dbReference type="Reactome" id="R-SPO-110312">
    <property type="pathway name" value="Translesion synthesis by REV1"/>
</dbReference>
<dbReference type="Reactome" id="R-SPO-5655862">
    <property type="pathway name" value="Translesion synthesis by POLK"/>
</dbReference>
<dbReference type="Reactome" id="R-SPO-5656121">
    <property type="pathway name" value="Translesion synthesis by POLI"/>
</dbReference>
<dbReference type="Reactome" id="R-SPO-5656169">
    <property type="pathway name" value="Termination of translesion DNA synthesis"/>
</dbReference>
<dbReference type="PRO" id="PR:O94623"/>
<dbReference type="Proteomes" id="UP000002485">
    <property type="component" value="Chromosome II"/>
</dbReference>
<dbReference type="GO" id="GO:0000262">
    <property type="term" value="C:mitochondrial chromosome"/>
    <property type="evidence" value="ECO:0000305"/>
    <property type="project" value="PomBase"/>
</dbReference>
<dbReference type="GO" id="GO:0072686">
    <property type="term" value="C:mitotic spindle"/>
    <property type="evidence" value="ECO:0007005"/>
    <property type="project" value="PomBase"/>
</dbReference>
<dbReference type="GO" id="GO:0005730">
    <property type="term" value="C:nucleolus"/>
    <property type="evidence" value="ECO:0007005"/>
    <property type="project" value="PomBase"/>
</dbReference>
<dbReference type="GO" id="GO:0005634">
    <property type="term" value="C:nucleus"/>
    <property type="evidence" value="ECO:0007005"/>
    <property type="project" value="PomBase"/>
</dbReference>
<dbReference type="GO" id="GO:0035861">
    <property type="term" value="C:site of double-strand break"/>
    <property type="evidence" value="ECO:0000314"/>
    <property type="project" value="PomBase"/>
</dbReference>
<dbReference type="GO" id="GO:0003684">
    <property type="term" value="F:damaged DNA binding"/>
    <property type="evidence" value="ECO:0007669"/>
    <property type="project" value="InterPro"/>
</dbReference>
<dbReference type="GO" id="GO:0017125">
    <property type="term" value="F:deoxycytidyl transferase activity"/>
    <property type="evidence" value="ECO:0000318"/>
    <property type="project" value="GO_Central"/>
</dbReference>
<dbReference type="GO" id="GO:0003887">
    <property type="term" value="F:DNA-directed DNA polymerase activity"/>
    <property type="evidence" value="ECO:0000318"/>
    <property type="project" value="GO_Central"/>
</dbReference>
<dbReference type="GO" id="GO:0046872">
    <property type="term" value="F:metal ion binding"/>
    <property type="evidence" value="ECO:0007669"/>
    <property type="project" value="UniProtKB-KW"/>
</dbReference>
<dbReference type="GO" id="GO:0070987">
    <property type="term" value="P:error-free translesion synthesis"/>
    <property type="evidence" value="ECO:0000316"/>
    <property type="project" value="PomBase"/>
</dbReference>
<dbReference type="GO" id="GO:0042276">
    <property type="term" value="P:error-prone translesion synthesis"/>
    <property type="evidence" value="ECO:0000315"/>
    <property type="project" value="PomBase"/>
</dbReference>
<dbReference type="GO" id="GO:0043504">
    <property type="term" value="P:mitochondrial DNA repair"/>
    <property type="evidence" value="ECO:0000305"/>
    <property type="project" value="PomBase"/>
</dbReference>
<dbReference type="CDD" id="cd17719">
    <property type="entry name" value="BRCT_Rev1"/>
    <property type="match status" value="1"/>
</dbReference>
<dbReference type="CDD" id="cd01701">
    <property type="entry name" value="PolY_Rev1"/>
    <property type="match status" value="1"/>
</dbReference>
<dbReference type="CDD" id="cd12145">
    <property type="entry name" value="Rev1_C"/>
    <property type="match status" value="1"/>
</dbReference>
<dbReference type="FunFam" id="3.40.1170.60:FF:000016">
    <property type="entry name" value="DNA damage repair protein"/>
    <property type="match status" value="1"/>
</dbReference>
<dbReference type="FunFam" id="1.20.58.1280:FF:000004">
    <property type="entry name" value="DNA repair protein REV1"/>
    <property type="match status" value="1"/>
</dbReference>
<dbReference type="FunFam" id="3.30.1490.100:FF:000001">
    <property type="entry name" value="DNA repair protein REV1"/>
    <property type="match status" value="1"/>
</dbReference>
<dbReference type="FunFam" id="3.40.50.10190:FF:000011">
    <property type="entry name" value="DNA repair protein REV1"/>
    <property type="match status" value="1"/>
</dbReference>
<dbReference type="Gene3D" id="3.30.70.270">
    <property type="match status" value="1"/>
</dbReference>
<dbReference type="Gene3D" id="3.40.1170.60">
    <property type="match status" value="1"/>
</dbReference>
<dbReference type="Gene3D" id="6.10.250.1490">
    <property type="match status" value="1"/>
</dbReference>
<dbReference type="Gene3D" id="1.10.150.20">
    <property type="entry name" value="5' to 3' exonuclease, C-terminal subdomain"/>
    <property type="match status" value="1"/>
</dbReference>
<dbReference type="Gene3D" id="3.40.50.10190">
    <property type="entry name" value="BRCT domain"/>
    <property type="match status" value="1"/>
</dbReference>
<dbReference type="Gene3D" id="3.30.1490.100">
    <property type="entry name" value="DNA polymerase, Y-family, little finger domain"/>
    <property type="match status" value="1"/>
</dbReference>
<dbReference type="Gene3D" id="1.20.58.1280">
    <property type="entry name" value="DNA repair protein Rev1, C-terminal domain"/>
    <property type="match status" value="1"/>
</dbReference>
<dbReference type="InterPro" id="IPR001357">
    <property type="entry name" value="BRCT_dom"/>
</dbReference>
<dbReference type="InterPro" id="IPR036420">
    <property type="entry name" value="BRCT_dom_sf"/>
</dbReference>
<dbReference type="InterPro" id="IPR043502">
    <property type="entry name" value="DNA/RNA_pol_sf"/>
</dbReference>
<dbReference type="InterPro" id="IPR036775">
    <property type="entry name" value="DNA_pol_Y-fam_lit_finger_sf"/>
</dbReference>
<dbReference type="InterPro" id="IPR017961">
    <property type="entry name" value="DNA_pol_Y-fam_little_finger"/>
</dbReference>
<dbReference type="InterPro" id="IPR053848">
    <property type="entry name" value="IMS_HHH_1"/>
</dbReference>
<dbReference type="InterPro" id="IPR012112">
    <property type="entry name" value="REV1"/>
</dbReference>
<dbReference type="InterPro" id="IPR031991">
    <property type="entry name" value="Rev1_C"/>
</dbReference>
<dbReference type="InterPro" id="IPR038401">
    <property type="entry name" value="Rev1_C_sf"/>
</dbReference>
<dbReference type="InterPro" id="IPR043128">
    <property type="entry name" value="Rev_trsase/Diguanyl_cyclase"/>
</dbReference>
<dbReference type="InterPro" id="IPR001126">
    <property type="entry name" value="UmuC"/>
</dbReference>
<dbReference type="PANTHER" id="PTHR45990">
    <property type="entry name" value="DNA REPAIR PROTEIN REV1"/>
    <property type="match status" value="1"/>
</dbReference>
<dbReference type="PANTHER" id="PTHR45990:SF1">
    <property type="entry name" value="DNA REPAIR PROTEIN REV1"/>
    <property type="match status" value="1"/>
</dbReference>
<dbReference type="Pfam" id="PF16589">
    <property type="entry name" value="BRCT_2"/>
    <property type="match status" value="1"/>
</dbReference>
<dbReference type="Pfam" id="PF00817">
    <property type="entry name" value="IMS"/>
    <property type="match status" value="1"/>
</dbReference>
<dbReference type="Pfam" id="PF11799">
    <property type="entry name" value="IMS_C"/>
    <property type="match status" value="1"/>
</dbReference>
<dbReference type="Pfam" id="PF21999">
    <property type="entry name" value="IMS_HHH_1"/>
    <property type="match status" value="1"/>
</dbReference>
<dbReference type="Pfam" id="PF16727">
    <property type="entry name" value="REV1_C"/>
    <property type="match status" value="1"/>
</dbReference>
<dbReference type="PIRSF" id="PIRSF036573">
    <property type="entry name" value="REV1"/>
    <property type="match status" value="1"/>
</dbReference>
<dbReference type="SMART" id="SM00292">
    <property type="entry name" value="BRCT"/>
    <property type="match status" value="1"/>
</dbReference>
<dbReference type="SUPFAM" id="SSF52113">
    <property type="entry name" value="BRCT domain"/>
    <property type="match status" value="1"/>
</dbReference>
<dbReference type="SUPFAM" id="SSF56672">
    <property type="entry name" value="DNA/RNA polymerases"/>
    <property type="match status" value="1"/>
</dbReference>
<dbReference type="SUPFAM" id="SSF100879">
    <property type="entry name" value="Lesion bypass DNA polymerase (Y-family), little finger domain"/>
    <property type="match status" value="1"/>
</dbReference>
<dbReference type="PROSITE" id="PS50172">
    <property type="entry name" value="BRCT"/>
    <property type="match status" value="1"/>
</dbReference>
<dbReference type="PROSITE" id="PS50173">
    <property type="entry name" value="UMUC"/>
    <property type="match status" value="1"/>
</dbReference>
<protein>
    <recommendedName>
        <fullName evidence="2">DNA repair protein rev1</fullName>
        <ecNumber>2.7.7.-</ecNumber>
    </recommendedName>
    <alternativeName>
        <fullName evidence="2">Reversionless protein 1</fullName>
    </alternativeName>
</protein>
<proteinExistence type="inferred from homology"/>
<feature type="chain" id="PRO_0000361684" description="DNA repair protein rev1">
    <location>
        <begin position="1"/>
        <end position="935"/>
    </location>
</feature>
<feature type="domain" description="BRCT" evidence="4">
    <location>
        <begin position="59"/>
        <end position="147"/>
    </location>
</feature>
<feature type="domain" description="UmuC" evidence="5">
    <location>
        <begin position="279"/>
        <end position="460"/>
    </location>
</feature>
<feature type="region of interest" description="Disordered" evidence="6">
    <location>
        <begin position="162"/>
        <end position="193"/>
    </location>
</feature>
<feature type="region of interest" description="Interaction with target DNA" evidence="1">
    <location>
        <begin position="235"/>
        <end position="245"/>
    </location>
</feature>
<feature type="region of interest" description="Interaction with target DNA" evidence="1">
    <location>
        <begin position="310"/>
        <end position="312"/>
    </location>
</feature>
<feature type="region of interest" description="Interaction with target DNA" evidence="1">
    <location>
        <begin position="460"/>
        <end position="463"/>
    </location>
</feature>
<feature type="region of interest" description="Interaction with target DNA" evidence="1">
    <location>
        <begin position="517"/>
        <end position="525"/>
    </location>
</feature>
<feature type="compositionally biased region" description="Polar residues" evidence="6">
    <location>
        <begin position="162"/>
        <end position="178"/>
    </location>
</feature>
<feature type="compositionally biased region" description="Basic and acidic residues" evidence="6">
    <location>
        <begin position="184"/>
        <end position="193"/>
    </location>
</feature>
<feature type="binding site" evidence="1">
    <location>
        <position position="240"/>
    </location>
    <ligand>
        <name>dCTP</name>
        <dbReference type="ChEBI" id="CHEBI:61481"/>
    </ligand>
</feature>
<feature type="binding site" evidence="1">
    <location>
        <begin position="283"/>
        <end position="287"/>
    </location>
    <ligand>
        <name>dCTP</name>
        <dbReference type="ChEBI" id="CHEBI:61481"/>
    </ligand>
</feature>
<feature type="binding site" evidence="5">
    <location>
        <position position="283"/>
    </location>
    <ligand>
        <name>Mg(2+)</name>
        <dbReference type="ChEBI" id="CHEBI:18420"/>
        <label>1</label>
    </ligand>
</feature>
<feature type="binding site" evidence="5">
    <location>
        <position position="283"/>
    </location>
    <ligand>
        <name>Mg(2+)</name>
        <dbReference type="ChEBI" id="CHEBI:18420"/>
        <label>2</label>
    </ligand>
</feature>
<feature type="binding site" evidence="5">
    <location>
        <position position="284"/>
    </location>
    <ligand>
        <name>Mg(2+)</name>
        <dbReference type="ChEBI" id="CHEBI:18420"/>
        <label>2</label>
    </ligand>
</feature>
<feature type="binding site" evidence="1">
    <location>
        <begin position="317"/>
        <end position="323"/>
    </location>
    <ligand>
        <name>dCTP</name>
        <dbReference type="ChEBI" id="CHEBI:61481"/>
    </ligand>
</feature>
<feature type="binding site" evidence="1">
    <location>
        <position position="329"/>
    </location>
    <ligand>
        <name>dCTP</name>
        <dbReference type="ChEBI" id="CHEBI:61481"/>
    </ligand>
</feature>
<feature type="binding site" evidence="1">
    <location>
        <position position="378"/>
    </location>
    <ligand>
        <name>dCTP</name>
        <dbReference type="ChEBI" id="CHEBI:61481"/>
    </ligand>
</feature>
<feature type="binding site" evidence="5">
    <location>
        <position position="378"/>
    </location>
    <ligand>
        <name>Mg(2+)</name>
        <dbReference type="ChEBI" id="CHEBI:18420"/>
        <label>1</label>
    </ligand>
</feature>
<feature type="binding site" evidence="5">
    <location>
        <position position="379"/>
    </location>
    <ligand>
        <name>Mg(2+)</name>
        <dbReference type="ChEBI" id="CHEBI:18420"/>
        <label>1</label>
    </ligand>
</feature>
<feature type="site" description="Interaction with target DNA" evidence="1">
    <location>
        <position position="578"/>
    </location>
</feature>
<feature type="site" description="Interaction with target DNA" evidence="1">
    <location>
        <position position="589"/>
    </location>
</feature>
<feature type="site" description="Interaction with target DNA" evidence="1">
    <location>
        <position position="591"/>
    </location>
</feature>
<keyword id="KW-0963">Cytoplasm</keyword>
<keyword id="KW-0206">Cytoskeleton</keyword>
<keyword id="KW-0227">DNA damage</keyword>
<keyword id="KW-0234">DNA repair</keyword>
<keyword id="KW-0237">DNA synthesis</keyword>
<keyword id="KW-0238">DNA-binding</keyword>
<keyword id="KW-0460">Magnesium</keyword>
<keyword id="KW-0479">Metal-binding</keyword>
<keyword id="KW-0496">Mitochondrion</keyword>
<keyword id="KW-0548">Nucleotidyltransferase</keyword>
<keyword id="KW-0539">Nucleus</keyword>
<keyword id="KW-1185">Reference proteome</keyword>
<keyword id="KW-0808">Transferase</keyword>
<comment type="function">
    <text evidence="1">Deoxycytidyl transferase involved in DNA repair. Transfers a dCMP residue from dCTP to the 3'-end of a DNA primer in a template-dependent reaction. May assist in the first step in the bypass of abasic lesions by the insertion of a nucleotide opposite the lesion. Required for normal induction of mutations by physical and chemical agents. Involved in mitochondrial DNA mutagenesis (By similarity).</text>
</comment>
<comment type="cofactor">
    <cofactor evidence="1">
        <name>Mg(2+)</name>
        <dbReference type="ChEBI" id="CHEBI:18420"/>
    </cofactor>
    <text evidence="1">Binds 2 magnesium ions.</text>
</comment>
<comment type="subcellular location">
    <subcellularLocation>
        <location evidence="7">Nucleus</location>
        <location evidence="7">Nucleolus</location>
    </subcellularLocation>
    <subcellularLocation>
        <location evidence="7">Mitochondrion</location>
    </subcellularLocation>
    <subcellularLocation>
        <location evidence="7">Cytoplasm</location>
        <location evidence="7">Cytoskeleton</location>
        <location evidence="7">Spindle</location>
    </subcellularLocation>
</comment>
<comment type="similarity">
    <text evidence="3">Belongs to the DNA polymerase type-Y family.</text>
</comment>
<accession>O94623</accession>
<organism>
    <name type="scientific">Schizosaccharomyces pombe (strain 972 / ATCC 24843)</name>
    <name type="common">Fission yeast</name>
    <dbReference type="NCBI Taxonomy" id="284812"/>
    <lineage>
        <taxon>Eukaryota</taxon>
        <taxon>Fungi</taxon>
        <taxon>Dikarya</taxon>
        <taxon>Ascomycota</taxon>
        <taxon>Taphrinomycotina</taxon>
        <taxon>Schizosaccharomycetes</taxon>
        <taxon>Schizosaccharomycetales</taxon>
        <taxon>Schizosaccharomycetaceae</taxon>
        <taxon>Schizosaccharomyces</taxon>
    </lineage>
</organism>
<sequence length="935" mass="106526">MAFNQRKRRRPVGIADFDEANDEAYESVGFHDYADYFSRKQRKLQNQNAALYKSIDEDSKSDLFHGLAIAINGYTKPSYTELRQMIVSNGGTFIQYVDGKTSISYLVCSFLTPSKARQWKHQKVVKPEWIVDCIKQKKILPWINYRTFQASSAQATLSFVASKPSQPEGNLEDIQTSSQEEEHDNEKDKTKESKAKGFLDDLSGLSASSLHNYQLLKNPNVRNSTTQNQDFLENFFSSSRLHHLSTWKADFKNEIQAMTTASEPVRPIMKDKSKKSRFLLHVDFDCFFASVSTRFSHELRLKPVAVAHGIKNSEIASCNYEARKFGIKNGMYVGTAKNLCPSLRVVDYDFGAYESVSREFYTILVNTLHDYIKVISIDEALLDITSSVSSFQDCFEIAESIRSQVREKTNCEVSVGIGPNVLLARLALRKAKPHNVYSLSIENVFDVLSPLSVQDLPGVGSSQAQKLFNLYGVRTIGQLQRIEKFNLQETFGVNYGLHLYNISRGIDTDIINNETPRRSISVDVNWGVRFVFQEDGIDFLKRLLHELLSRMGKCQVLLHQIQLRILKRADGAPFSPPKYLGAGEVTSFTKSSTFTSATNSFDLIWKKVTSMYKTINVDPGDVRGIGLQALKIIKDNSKIRKDYRSIQSITSRNKVSLKGASVDISSKDKEIISQKKQLSPKLIPSTPYDLPSSSQISSSALAQLPPSMQSDIQQQLRLQKRSITEYPSQLDPLFMVELPTPIRNEVNDNHEIAMNKRLSLKSHADNKIDERGKKKIRQENAFDKLLQISKKSKTINKPNVDYLTLKELPKDLQKQILKESNLQKSDLISEVKLEKPHIVTFQHVQSLEDLRGLLTKWYSKASKGPNIHDVNYFANYVCRVIREEKNLGKAQMMLKWLYQLNRKECNKPWEKAIDKIIETVQGECLQRNIPPLMIF</sequence>